<keyword id="KW-0004">4Fe-4S</keyword>
<keyword id="KW-0963">Cytoplasm</keyword>
<keyword id="KW-0408">Iron</keyword>
<keyword id="KW-0411">Iron-sulfur</keyword>
<keyword id="KW-0479">Metal-binding</keyword>
<keyword id="KW-0949">S-adenosyl-L-methionine</keyword>
<keyword id="KW-0808">Transferase</keyword>
<reference key="1">
    <citation type="journal article" date="2005" name="Genome Res.">
        <title>Comparative and functional genomic analyses of the pathogenicity of phytopathogen Xanthomonas campestris pv. campestris.</title>
        <authorList>
            <person name="Qian W."/>
            <person name="Jia Y."/>
            <person name="Ren S.-X."/>
            <person name="He Y.-Q."/>
            <person name="Feng J.-X."/>
            <person name="Lu L.-F."/>
            <person name="Sun Q."/>
            <person name="Ying G."/>
            <person name="Tang D.-J."/>
            <person name="Tang H."/>
            <person name="Wu W."/>
            <person name="Hao P."/>
            <person name="Wang L."/>
            <person name="Jiang B.-L."/>
            <person name="Zeng S."/>
            <person name="Gu W.-Y."/>
            <person name="Lu G."/>
            <person name="Rong L."/>
            <person name="Tian Y."/>
            <person name="Yao Z."/>
            <person name="Fu G."/>
            <person name="Chen B."/>
            <person name="Fang R."/>
            <person name="Qiang B."/>
            <person name="Chen Z."/>
            <person name="Zhao G.-P."/>
            <person name="Tang J.-L."/>
            <person name="He C."/>
        </authorList>
    </citation>
    <scope>NUCLEOTIDE SEQUENCE [LARGE SCALE GENOMIC DNA]</scope>
    <source>
        <strain>8004</strain>
    </source>
</reference>
<comment type="function">
    <text evidence="1">Catalyzes the radical-mediated insertion of two sulfur atoms into the C-6 and C-8 positions of the octanoyl moiety bound to the lipoyl domains of lipoate-dependent enzymes, thereby converting the octanoylated domains into lipoylated derivatives.</text>
</comment>
<comment type="catalytic activity">
    <reaction evidence="1">
        <text>[[Fe-S] cluster scaffold protein carrying a second [4Fe-4S](2+) cluster] + N(6)-octanoyl-L-lysyl-[protein] + 2 oxidized [2Fe-2S]-[ferredoxin] + 2 S-adenosyl-L-methionine + 4 H(+) = [[Fe-S] cluster scaffold protein] + N(6)-[(R)-dihydrolipoyl]-L-lysyl-[protein] + 4 Fe(3+) + 2 hydrogen sulfide + 2 5'-deoxyadenosine + 2 L-methionine + 2 reduced [2Fe-2S]-[ferredoxin]</text>
        <dbReference type="Rhea" id="RHEA:16585"/>
        <dbReference type="Rhea" id="RHEA-COMP:9928"/>
        <dbReference type="Rhea" id="RHEA-COMP:10000"/>
        <dbReference type="Rhea" id="RHEA-COMP:10001"/>
        <dbReference type="Rhea" id="RHEA-COMP:10475"/>
        <dbReference type="Rhea" id="RHEA-COMP:14568"/>
        <dbReference type="Rhea" id="RHEA-COMP:14569"/>
        <dbReference type="ChEBI" id="CHEBI:15378"/>
        <dbReference type="ChEBI" id="CHEBI:17319"/>
        <dbReference type="ChEBI" id="CHEBI:29034"/>
        <dbReference type="ChEBI" id="CHEBI:29919"/>
        <dbReference type="ChEBI" id="CHEBI:33722"/>
        <dbReference type="ChEBI" id="CHEBI:33737"/>
        <dbReference type="ChEBI" id="CHEBI:33738"/>
        <dbReference type="ChEBI" id="CHEBI:57844"/>
        <dbReference type="ChEBI" id="CHEBI:59789"/>
        <dbReference type="ChEBI" id="CHEBI:78809"/>
        <dbReference type="ChEBI" id="CHEBI:83100"/>
        <dbReference type="EC" id="2.8.1.8"/>
    </reaction>
</comment>
<comment type="cofactor">
    <cofactor evidence="1">
        <name>[4Fe-4S] cluster</name>
        <dbReference type="ChEBI" id="CHEBI:49883"/>
    </cofactor>
    <text evidence="1">Binds 2 [4Fe-4S] clusters per subunit. One cluster is coordinated with 3 cysteines and an exchangeable S-adenosyl-L-methionine.</text>
</comment>
<comment type="pathway">
    <text evidence="1">Protein modification; protein lipoylation via endogenous pathway; protein N(6)-(lipoyl)lysine from octanoyl-[acyl-carrier-protein]: step 2/2.</text>
</comment>
<comment type="subcellular location">
    <subcellularLocation>
        <location evidence="1">Cytoplasm</location>
    </subcellularLocation>
</comment>
<comment type="similarity">
    <text evidence="1">Belongs to the radical SAM superfamily. Lipoyl synthase family.</text>
</comment>
<organism>
    <name type="scientific">Xanthomonas campestris pv. campestris (strain 8004)</name>
    <dbReference type="NCBI Taxonomy" id="314565"/>
    <lineage>
        <taxon>Bacteria</taxon>
        <taxon>Pseudomonadati</taxon>
        <taxon>Pseudomonadota</taxon>
        <taxon>Gammaproteobacteria</taxon>
        <taxon>Lysobacterales</taxon>
        <taxon>Lysobacteraceae</taxon>
        <taxon>Xanthomonas</taxon>
    </lineage>
</organism>
<protein>
    <recommendedName>
        <fullName evidence="1">Lipoyl synthase</fullName>
        <ecNumber evidence="1">2.8.1.8</ecNumber>
    </recommendedName>
    <alternativeName>
        <fullName evidence="1">Lip-syn</fullName>
        <shortName evidence="1">LS</shortName>
    </alternativeName>
    <alternativeName>
        <fullName evidence="1">Lipoate synthase</fullName>
    </alternativeName>
    <alternativeName>
        <fullName evidence="1">Lipoic acid synthase</fullName>
    </alternativeName>
    <alternativeName>
        <fullName evidence="1">Sulfur insertion protein LipA</fullName>
    </alternativeName>
</protein>
<sequence>MTQPIARSIPLQVVSGDTAAPASLQTGVKQIGGDKINRSPVQFVDAPVLRKPSWIRVRIPSGNAVQNLKAKLRENRLVTVCEEASCPNIHECFSHGTATFMILGEVCTRRCSFCDVAHGRPKPPDASEPASLATTVADMGLKYVVVTSVDRDDLRDGGAQHFVDCISAIRASAPKTRIEILTPDFRGKGRMDRALEILATSPPDVFNHNIETVPDLYPNVRPGADYQWSLTLLQRFKAQHPTIATKSGIMLGLGETMEQVQVTLRDLRAHDVDMITIGQYLQPTPHHHPVMRYWTPEEYKALEEYGNALGFSHVASGPMVRSSYHADRQAAGAGVAA</sequence>
<feature type="chain" id="PRO_1000012298" description="Lipoyl synthase">
    <location>
        <begin position="1"/>
        <end position="337"/>
    </location>
</feature>
<feature type="domain" description="Radical SAM core" evidence="2">
    <location>
        <begin position="93"/>
        <end position="312"/>
    </location>
</feature>
<feature type="binding site" evidence="1">
    <location>
        <position position="81"/>
    </location>
    <ligand>
        <name>[4Fe-4S] cluster</name>
        <dbReference type="ChEBI" id="CHEBI:49883"/>
        <label>1</label>
    </ligand>
</feature>
<feature type="binding site" evidence="1">
    <location>
        <position position="86"/>
    </location>
    <ligand>
        <name>[4Fe-4S] cluster</name>
        <dbReference type="ChEBI" id="CHEBI:49883"/>
        <label>1</label>
    </ligand>
</feature>
<feature type="binding site" evidence="1">
    <location>
        <position position="92"/>
    </location>
    <ligand>
        <name>[4Fe-4S] cluster</name>
        <dbReference type="ChEBI" id="CHEBI:49883"/>
        <label>1</label>
    </ligand>
</feature>
<feature type="binding site" evidence="1">
    <location>
        <position position="107"/>
    </location>
    <ligand>
        <name>[4Fe-4S] cluster</name>
        <dbReference type="ChEBI" id="CHEBI:49883"/>
        <label>2</label>
        <note>4Fe-4S-S-AdoMet</note>
    </ligand>
</feature>
<feature type="binding site" evidence="1">
    <location>
        <position position="111"/>
    </location>
    <ligand>
        <name>[4Fe-4S] cluster</name>
        <dbReference type="ChEBI" id="CHEBI:49883"/>
        <label>2</label>
        <note>4Fe-4S-S-AdoMet</note>
    </ligand>
</feature>
<feature type="binding site" evidence="1">
    <location>
        <position position="114"/>
    </location>
    <ligand>
        <name>[4Fe-4S] cluster</name>
        <dbReference type="ChEBI" id="CHEBI:49883"/>
        <label>2</label>
        <note>4Fe-4S-S-AdoMet</note>
    </ligand>
</feature>
<feature type="binding site" evidence="1">
    <location>
        <position position="323"/>
    </location>
    <ligand>
        <name>[4Fe-4S] cluster</name>
        <dbReference type="ChEBI" id="CHEBI:49883"/>
        <label>1</label>
    </ligand>
</feature>
<proteinExistence type="inferred from homology"/>
<dbReference type="EC" id="2.8.1.8" evidence="1"/>
<dbReference type="EMBL" id="CP000050">
    <property type="protein sequence ID" value="AAY47791.1"/>
    <property type="molecule type" value="Genomic_DNA"/>
</dbReference>
<dbReference type="RefSeq" id="WP_011038549.1">
    <property type="nucleotide sequence ID" value="NZ_CP155948.1"/>
</dbReference>
<dbReference type="SMR" id="Q4UYT2"/>
<dbReference type="KEGG" id="xcb:XC_0713"/>
<dbReference type="HOGENOM" id="CLU_033144_2_1_6"/>
<dbReference type="UniPathway" id="UPA00538">
    <property type="reaction ID" value="UER00593"/>
</dbReference>
<dbReference type="Proteomes" id="UP000000420">
    <property type="component" value="Chromosome"/>
</dbReference>
<dbReference type="GO" id="GO:0005737">
    <property type="term" value="C:cytoplasm"/>
    <property type="evidence" value="ECO:0007669"/>
    <property type="project" value="UniProtKB-SubCell"/>
</dbReference>
<dbReference type="GO" id="GO:0051539">
    <property type="term" value="F:4 iron, 4 sulfur cluster binding"/>
    <property type="evidence" value="ECO:0007669"/>
    <property type="project" value="UniProtKB-UniRule"/>
</dbReference>
<dbReference type="GO" id="GO:0016992">
    <property type="term" value="F:lipoate synthase activity"/>
    <property type="evidence" value="ECO:0007669"/>
    <property type="project" value="UniProtKB-UniRule"/>
</dbReference>
<dbReference type="GO" id="GO:0046872">
    <property type="term" value="F:metal ion binding"/>
    <property type="evidence" value="ECO:0007669"/>
    <property type="project" value="UniProtKB-KW"/>
</dbReference>
<dbReference type="CDD" id="cd01335">
    <property type="entry name" value="Radical_SAM"/>
    <property type="match status" value="1"/>
</dbReference>
<dbReference type="FunFam" id="3.20.20.70:FF:000023">
    <property type="entry name" value="Lipoyl synthase"/>
    <property type="match status" value="1"/>
</dbReference>
<dbReference type="Gene3D" id="3.20.20.70">
    <property type="entry name" value="Aldolase class I"/>
    <property type="match status" value="1"/>
</dbReference>
<dbReference type="HAMAP" id="MF_00206">
    <property type="entry name" value="Lipoyl_synth"/>
    <property type="match status" value="1"/>
</dbReference>
<dbReference type="InterPro" id="IPR013785">
    <property type="entry name" value="Aldolase_TIM"/>
</dbReference>
<dbReference type="InterPro" id="IPR006638">
    <property type="entry name" value="Elp3/MiaA/NifB-like_rSAM"/>
</dbReference>
<dbReference type="InterPro" id="IPR031691">
    <property type="entry name" value="LIAS_N"/>
</dbReference>
<dbReference type="InterPro" id="IPR003698">
    <property type="entry name" value="Lipoyl_synth"/>
</dbReference>
<dbReference type="InterPro" id="IPR007197">
    <property type="entry name" value="rSAM"/>
</dbReference>
<dbReference type="NCBIfam" id="TIGR00510">
    <property type="entry name" value="lipA"/>
    <property type="match status" value="1"/>
</dbReference>
<dbReference type="NCBIfam" id="NF004019">
    <property type="entry name" value="PRK05481.1"/>
    <property type="match status" value="1"/>
</dbReference>
<dbReference type="NCBIfam" id="NF009544">
    <property type="entry name" value="PRK12928.1"/>
    <property type="match status" value="1"/>
</dbReference>
<dbReference type="PANTHER" id="PTHR10949">
    <property type="entry name" value="LIPOYL SYNTHASE"/>
    <property type="match status" value="1"/>
</dbReference>
<dbReference type="PANTHER" id="PTHR10949:SF0">
    <property type="entry name" value="LIPOYL SYNTHASE, MITOCHONDRIAL"/>
    <property type="match status" value="1"/>
</dbReference>
<dbReference type="Pfam" id="PF16881">
    <property type="entry name" value="LIAS_N"/>
    <property type="match status" value="1"/>
</dbReference>
<dbReference type="Pfam" id="PF04055">
    <property type="entry name" value="Radical_SAM"/>
    <property type="match status" value="1"/>
</dbReference>
<dbReference type="PIRSF" id="PIRSF005963">
    <property type="entry name" value="Lipoyl_synth"/>
    <property type="match status" value="1"/>
</dbReference>
<dbReference type="SFLD" id="SFLDF00271">
    <property type="entry name" value="lipoyl_synthase"/>
    <property type="match status" value="1"/>
</dbReference>
<dbReference type="SFLD" id="SFLDG01058">
    <property type="entry name" value="lipoyl_synthase_like"/>
    <property type="match status" value="1"/>
</dbReference>
<dbReference type="SMART" id="SM00729">
    <property type="entry name" value="Elp3"/>
    <property type="match status" value="1"/>
</dbReference>
<dbReference type="SUPFAM" id="SSF102114">
    <property type="entry name" value="Radical SAM enzymes"/>
    <property type="match status" value="1"/>
</dbReference>
<dbReference type="PROSITE" id="PS51918">
    <property type="entry name" value="RADICAL_SAM"/>
    <property type="match status" value="1"/>
</dbReference>
<gene>
    <name evidence="1" type="primary">lipA</name>
    <name type="ordered locus">XC_0713</name>
</gene>
<name>LIPA_XANC8</name>
<accession>Q4UYT2</accession>
<evidence type="ECO:0000255" key="1">
    <source>
        <dbReference type="HAMAP-Rule" id="MF_00206"/>
    </source>
</evidence>
<evidence type="ECO:0000255" key="2">
    <source>
        <dbReference type="PROSITE-ProRule" id="PRU01266"/>
    </source>
</evidence>